<protein>
    <recommendedName>
        <fullName>Adenylosuccinate lyase</fullName>
        <shortName>ASL</shortName>
        <ecNumber evidence="2">4.3.2.2</ecNumber>
    </recommendedName>
    <alternativeName>
        <fullName>Adenylosuccinase</fullName>
        <shortName>ASase</shortName>
    </alternativeName>
</protein>
<proteinExistence type="inferred from homology"/>
<name>PUR8_LEGPC</name>
<gene>
    <name type="primary">purB</name>
    <name type="ordered locus">LPC_2494</name>
</gene>
<keyword id="KW-0456">Lyase</keyword>
<keyword id="KW-0658">Purine biosynthesis</keyword>
<evidence type="ECO:0000250" key="1"/>
<evidence type="ECO:0000250" key="2">
    <source>
        <dbReference type="UniProtKB" id="P0AB89"/>
    </source>
</evidence>
<evidence type="ECO:0000305" key="3"/>
<sequence length="456" mass="51403">MTLTALNAISPIDGRYVNKTRALSPYFSEFALTYYRLMVEIKWFESLAANDTIPEVPALDNKARKFLSDLISNFNESEAEKIKEFEKQTNHDVKAVEYYLKDKFQENEQLKSCVAFIHFACTSEDINNLAYALMIKQAIAQVIQPTIAEIMGSITLLGKQHADVAMLSRTHGQPATPTTMGKELVNFVARLKRPQQQLAEVLIPAKFNGAVGNYNAHVAAYPEVDWRKHCANFVTSLGLSFNAYTTQIEPHDGIAEVSQIMVRINNILLDYTQDIWSYISLGYFKQKTIAEEVGSSTMPHKVNPIDFENAEGNLGLSNALFIHFANKLTQSRMQRDLSDSTVLRNLGVAFSYSLIAYHSVAKGNDKLQINKSALQKDLSENWEVLAEAIQTVMRRYNEPNAYEQLKELTRGQMIDAENLKKFIKTLSIPEEAKAELMKLTPETYTGLATQLVKAFS</sequence>
<dbReference type="EC" id="4.3.2.2" evidence="2"/>
<dbReference type="EMBL" id="CP000675">
    <property type="protein sequence ID" value="ABQ56413.1"/>
    <property type="molecule type" value="Genomic_DNA"/>
</dbReference>
<dbReference type="RefSeq" id="WP_011945923.1">
    <property type="nucleotide sequence ID" value="NZ_JAPMSS010000002.1"/>
</dbReference>
<dbReference type="SMR" id="A5IGB3"/>
<dbReference type="KEGG" id="lpc:LPC_2494"/>
<dbReference type="HOGENOM" id="CLU_025566_2_0_6"/>
<dbReference type="UniPathway" id="UPA00074">
    <property type="reaction ID" value="UER00132"/>
</dbReference>
<dbReference type="UniPathway" id="UPA00075">
    <property type="reaction ID" value="UER00336"/>
</dbReference>
<dbReference type="GO" id="GO:0005829">
    <property type="term" value="C:cytosol"/>
    <property type="evidence" value="ECO:0007669"/>
    <property type="project" value="TreeGrafter"/>
</dbReference>
<dbReference type="GO" id="GO:0070626">
    <property type="term" value="F:(S)-2-(5-amino-1-(5-phospho-D-ribosyl)imidazole-4-carboxamido) succinate lyase (fumarate-forming) activity"/>
    <property type="evidence" value="ECO:0007669"/>
    <property type="project" value="RHEA"/>
</dbReference>
<dbReference type="GO" id="GO:0004018">
    <property type="term" value="F:N6-(1,2-dicarboxyethyl)AMP AMP-lyase (fumarate-forming) activity"/>
    <property type="evidence" value="ECO:0007669"/>
    <property type="project" value="InterPro"/>
</dbReference>
<dbReference type="GO" id="GO:0044208">
    <property type="term" value="P:'de novo' AMP biosynthetic process"/>
    <property type="evidence" value="ECO:0007669"/>
    <property type="project" value="UniProtKB-UniPathway"/>
</dbReference>
<dbReference type="GO" id="GO:0006189">
    <property type="term" value="P:'de novo' IMP biosynthetic process"/>
    <property type="evidence" value="ECO:0007669"/>
    <property type="project" value="UniProtKB-UniPathway"/>
</dbReference>
<dbReference type="CDD" id="cd01598">
    <property type="entry name" value="PurB"/>
    <property type="match status" value="1"/>
</dbReference>
<dbReference type="FunFam" id="1.20.200.10:FF:000004">
    <property type="entry name" value="Adenylosuccinate lyase"/>
    <property type="match status" value="1"/>
</dbReference>
<dbReference type="Gene3D" id="1.10.40.30">
    <property type="entry name" value="Fumarase/aspartase (C-terminal domain)"/>
    <property type="match status" value="1"/>
</dbReference>
<dbReference type="Gene3D" id="1.20.200.10">
    <property type="entry name" value="Fumarase/aspartase (Central domain)"/>
    <property type="match status" value="1"/>
</dbReference>
<dbReference type="Gene3D" id="1.10.275.10">
    <property type="entry name" value="Fumarase/aspartase (N-terminal domain)"/>
    <property type="match status" value="1"/>
</dbReference>
<dbReference type="InterPro" id="IPR024083">
    <property type="entry name" value="Fumarase/histidase_N"/>
</dbReference>
<dbReference type="InterPro" id="IPR020557">
    <property type="entry name" value="Fumarate_lyase_CS"/>
</dbReference>
<dbReference type="InterPro" id="IPR000362">
    <property type="entry name" value="Fumarate_lyase_fam"/>
</dbReference>
<dbReference type="InterPro" id="IPR022761">
    <property type="entry name" value="Fumarate_lyase_N"/>
</dbReference>
<dbReference type="InterPro" id="IPR008948">
    <property type="entry name" value="L-Aspartase-like"/>
</dbReference>
<dbReference type="InterPro" id="IPR004769">
    <property type="entry name" value="Pur_lyase"/>
</dbReference>
<dbReference type="InterPro" id="IPR047136">
    <property type="entry name" value="PurB_bact"/>
</dbReference>
<dbReference type="InterPro" id="IPR013539">
    <property type="entry name" value="PurB_C"/>
</dbReference>
<dbReference type="NCBIfam" id="NF006764">
    <property type="entry name" value="PRK09285.1"/>
    <property type="match status" value="1"/>
</dbReference>
<dbReference type="NCBIfam" id="TIGR00928">
    <property type="entry name" value="purB"/>
    <property type="match status" value="1"/>
</dbReference>
<dbReference type="PANTHER" id="PTHR43411">
    <property type="entry name" value="ADENYLOSUCCINATE LYASE"/>
    <property type="match status" value="1"/>
</dbReference>
<dbReference type="PANTHER" id="PTHR43411:SF1">
    <property type="entry name" value="ADENYLOSUCCINATE LYASE"/>
    <property type="match status" value="1"/>
</dbReference>
<dbReference type="Pfam" id="PF08328">
    <property type="entry name" value="ASL_C"/>
    <property type="match status" value="1"/>
</dbReference>
<dbReference type="Pfam" id="PF00206">
    <property type="entry name" value="Lyase_1"/>
    <property type="match status" value="1"/>
</dbReference>
<dbReference type="PRINTS" id="PR00149">
    <property type="entry name" value="FUMRATELYASE"/>
</dbReference>
<dbReference type="SUPFAM" id="SSF48557">
    <property type="entry name" value="L-aspartase-like"/>
    <property type="match status" value="1"/>
</dbReference>
<dbReference type="PROSITE" id="PS00163">
    <property type="entry name" value="FUMARATE_LYASES"/>
    <property type="match status" value="1"/>
</dbReference>
<reference key="1">
    <citation type="submission" date="2006-11" db="EMBL/GenBank/DDBJ databases">
        <title>Identification and characterization of a new conjugation/ type IVA secretion system (trb/tra) of L. pneumophila Corby localized on a mobile genomic island.</title>
        <authorList>
            <person name="Gloeckner G."/>
            <person name="Albert-Weissenberger C."/>
            <person name="Weinmann E."/>
            <person name="Jacobi S."/>
            <person name="Schunder E."/>
            <person name="Steinert M."/>
            <person name="Buchrieser C."/>
            <person name="Hacker J."/>
            <person name="Heuner K."/>
        </authorList>
    </citation>
    <scope>NUCLEOTIDE SEQUENCE [LARGE SCALE GENOMIC DNA]</scope>
    <source>
        <strain>Corby</strain>
    </source>
</reference>
<feature type="chain" id="PRO_0000349272" description="Adenylosuccinate lyase">
    <location>
        <begin position="1"/>
        <end position="456"/>
    </location>
</feature>
<feature type="active site" description="Proton donor/acceptor" evidence="2">
    <location>
        <position position="171"/>
    </location>
</feature>
<feature type="active site" description="Proton donor/acceptor" evidence="2">
    <location>
        <position position="295"/>
    </location>
</feature>
<feature type="binding site" evidence="2">
    <location>
        <begin position="15"/>
        <end position="16"/>
    </location>
    <ligand>
        <name>N(6)-(1,2-dicarboxyethyl)-AMP</name>
        <dbReference type="ChEBI" id="CHEBI:57567"/>
    </ligand>
</feature>
<feature type="binding site" evidence="2">
    <location>
        <begin position="90"/>
        <end position="92"/>
    </location>
    <ligand>
        <name>N(6)-(1,2-dicarboxyethyl)-AMP</name>
        <dbReference type="ChEBI" id="CHEBI:57567"/>
    </ligand>
</feature>
<feature type="binding site" evidence="2">
    <location>
        <begin position="122"/>
        <end position="123"/>
    </location>
    <ligand>
        <name>N(6)-(1,2-dicarboxyethyl)-AMP</name>
        <dbReference type="ChEBI" id="CHEBI:57567"/>
    </ligand>
</feature>
<feature type="binding site" evidence="2">
    <location>
        <position position="247"/>
    </location>
    <ligand>
        <name>N(6)-(1,2-dicarboxyethyl)-AMP</name>
        <dbReference type="ChEBI" id="CHEBI:57567"/>
    </ligand>
</feature>
<feature type="binding site" evidence="2">
    <location>
        <position position="296"/>
    </location>
    <ligand>
        <name>N(6)-(1,2-dicarboxyethyl)-AMP</name>
        <dbReference type="ChEBI" id="CHEBI:57567"/>
    </ligand>
</feature>
<feature type="binding site" evidence="2">
    <location>
        <begin position="301"/>
        <end position="303"/>
    </location>
    <ligand>
        <name>N(6)-(1,2-dicarboxyethyl)-AMP</name>
        <dbReference type="ChEBI" id="CHEBI:57567"/>
    </ligand>
</feature>
<feature type="binding site" evidence="2">
    <location>
        <position position="309"/>
    </location>
    <ligand>
        <name>N(6)-(1,2-dicarboxyethyl)-AMP</name>
        <dbReference type="ChEBI" id="CHEBI:57567"/>
    </ligand>
</feature>
<feature type="binding site" evidence="2">
    <location>
        <position position="335"/>
    </location>
    <ligand>
        <name>N(6)-(1,2-dicarboxyethyl)-AMP</name>
        <dbReference type="ChEBI" id="CHEBI:57567"/>
    </ligand>
</feature>
<feature type="binding site" evidence="2">
    <location>
        <begin position="340"/>
        <end position="344"/>
    </location>
    <ligand>
        <name>N(6)-(1,2-dicarboxyethyl)-AMP</name>
        <dbReference type="ChEBI" id="CHEBI:57567"/>
    </ligand>
</feature>
<accession>A5IGB3</accession>
<comment type="function">
    <text evidence="2">Catalyzes two reactions in de novo purine nucleotide biosynthesis. Catalyzes the breakdown of 5-aminoimidazole- (N-succinylocarboxamide) ribotide (SAICAR or 2-[5-amino-1-(5-phospho-beta-D-ribosyl)imidazole-4-carboxamido]succinate) to 5-aminoimidazole-4-carboxamide ribotide (AICAR or 5-amino-1-(5-phospho-beta-D-ribosyl)imidazole-4-carboxamide) and fumarate, and of adenylosuccinate (ADS or N(6)-(1,2-dicarboxyethyl)-AMP) to adenosine monophosphate (AMP) and fumarate.</text>
</comment>
<comment type="catalytic activity">
    <reaction evidence="2">
        <text>N(6)-(1,2-dicarboxyethyl)-AMP = fumarate + AMP</text>
        <dbReference type="Rhea" id="RHEA:16853"/>
        <dbReference type="ChEBI" id="CHEBI:29806"/>
        <dbReference type="ChEBI" id="CHEBI:57567"/>
        <dbReference type="ChEBI" id="CHEBI:456215"/>
        <dbReference type="EC" id="4.3.2.2"/>
    </reaction>
    <physiologicalReaction direction="left-to-right" evidence="2">
        <dbReference type="Rhea" id="RHEA:16854"/>
    </physiologicalReaction>
</comment>
<comment type="catalytic activity">
    <reaction evidence="2">
        <text>(2S)-2-[5-amino-1-(5-phospho-beta-D-ribosyl)imidazole-4-carboxamido]succinate = 5-amino-1-(5-phospho-beta-D-ribosyl)imidazole-4-carboxamide + fumarate</text>
        <dbReference type="Rhea" id="RHEA:23920"/>
        <dbReference type="ChEBI" id="CHEBI:29806"/>
        <dbReference type="ChEBI" id="CHEBI:58443"/>
        <dbReference type="ChEBI" id="CHEBI:58475"/>
        <dbReference type="EC" id="4.3.2.2"/>
    </reaction>
    <physiologicalReaction direction="left-to-right" evidence="2">
        <dbReference type="Rhea" id="RHEA:23921"/>
    </physiologicalReaction>
</comment>
<comment type="pathway">
    <text>Purine metabolism; AMP biosynthesis via de novo pathway; AMP from IMP: step 2/2.</text>
</comment>
<comment type="pathway">
    <text>Purine metabolism; IMP biosynthesis via de novo pathway; 5-amino-1-(5-phospho-D-ribosyl)imidazole-4-carboxamide from 5-amino-1-(5-phospho-D-ribosyl)imidazole-4-carboxylate: step 2/2.</text>
</comment>
<comment type="subunit">
    <text evidence="1">Homotetramer. Residues from neighboring subunits contribute catalytic and substrate-binding residues to each active site (By similarity).</text>
</comment>
<comment type="similarity">
    <text evidence="3">Belongs to the lyase 1 family. Adenylosuccinate lyase subfamily.</text>
</comment>
<organism>
    <name type="scientific">Legionella pneumophila (strain Corby)</name>
    <dbReference type="NCBI Taxonomy" id="400673"/>
    <lineage>
        <taxon>Bacteria</taxon>
        <taxon>Pseudomonadati</taxon>
        <taxon>Pseudomonadota</taxon>
        <taxon>Gammaproteobacteria</taxon>
        <taxon>Legionellales</taxon>
        <taxon>Legionellaceae</taxon>
        <taxon>Legionella</taxon>
    </lineage>
</organism>